<comment type="function">
    <text evidence="1">ATP-binding RNA helicase involved in transcription elongation and required for the export of mRNA out of the nucleus. SUB2 also plays a role in pre-mRNA splicing and spliceosome assembly. May be involved in rDNA and telomeric silencing, and maintenance of genome integrity (By similarity).</text>
</comment>
<comment type="catalytic activity">
    <reaction>
        <text>ATP + H2O = ADP + phosphate + H(+)</text>
        <dbReference type="Rhea" id="RHEA:13065"/>
        <dbReference type="ChEBI" id="CHEBI:15377"/>
        <dbReference type="ChEBI" id="CHEBI:15378"/>
        <dbReference type="ChEBI" id="CHEBI:30616"/>
        <dbReference type="ChEBI" id="CHEBI:43474"/>
        <dbReference type="ChEBI" id="CHEBI:456216"/>
        <dbReference type="EC" id="3.6.4.13"/>
    </reaction>
</comment>
<comment type="subcellular location">
    <subcellularLocation>
        <location evidence="1">Nucleus</location>
    </subcellularLocation>
</comment>
<comment type="domain">
    <text>The Q motif is unique to and characteristic of the DEAD box family of RNA helicases and controls ATP binding and hydrolysis.</text>
</comment>
<comment type="similarity">
    <text evidence="5">Belongs to the DEAD box helicase family. DECD subfamily.</text>
</comment>
<sequence>MSHEEDLIDYSDEELQTTDAAATTAAPAANGAQDKKGDLTVSGGRPDKKGSYVGIHSTGFRDFLLKGELLRAITDCGFEHPSEVQQVCIPTAILNVDVLCQAKSGLGKTAVFVLTTLHQLEPVPGECSVLVMCHTRELAYQIKNEYARFSKYLPDVKTAVFYGGTPIQKDIEVLSNKESYPNIVVGTPGRLNALVREKKLSLRNVKAFVLDECDKMLDQIGKQAQIAHMRRDVQEIFRATPADKQVMMFSATLSQEIRPICKKFMRNPLEVYVDDDTKLTLHGLQQYYIKLSESEKNRKLNELLDSLEFNQVIIFVKSTLRANELDKLLRECNFPSIAVHSGVSQEERIKRYKEFKEFNKRICVATDVFGRGIDIERINLAINYDLPADADSYLHRVGRAGRFGTKGLSISFVSSEEDEKVLKEIEKRFEVALPEYPEGGVDSSTYMA</sequence>
<feature type="chain" id="PRO_0000232260" description="ATP-dependent RNA helicase sub2">
    <location>
        <begin position="1"/>
        <end position="448"/>
    </location>
</feature>
<feature type="domain" description="Helicase ATP-binding" evidence="2">
    <location>
        <begin position="89"/>
        <end position="271"/>
    </location>
</feature>
<feature type="domain" description="Helicase C-terminal" evidence="3">
    <location>
        <begin position="283"/>
        <end position="444"/>
    </location>
</feature>
<feature type="region of interest" description="Disordered" evidence="4">
    <location>
        <begin position="19"/>
        <end position="43"/>
    </location>
</feature>
<feature type="short sequence motif" description="Q motif">
    <location>
        <begin position="58"/>
        <end position="86"/>
    </location>
</feature>
<feature type="short sequence motif" description="DECD box">
    <location>
        <begin position="211"/>
        <end position="214"/>
    </location>
</feature>
<feature type="compositionally biased region" description="Low complexity" evidence="4">
    <location>
        <begin position="19"/>
        <end position="29"/>
    </location>
</feature>
<feature type="binding site" evidence="2">
    <location>
        <begin position="102"/>
        <end position="109"/>
    </location>
    <ligand>
        <name>ATP</name>
        <dbReference type="ChEBI" id="CHEBI:30616"/>
    </ligand>
</feature>
<protein>
    <recommendedName>
        <fullName>ATP-dependent RNA helicase sub2</fullName>
        <ecNumber>3.6.4.13</ecNumber>
    </recommendedName>
</protein>
<name>SUB2_ASPFU</name>
<gene>
    <name type="primary">sub2</name>
    <name type="ORF">AFUA_6G02630</name>
</gene>
<dbReference type="EC" id="3.6.4.13"/>
<dbReference type="EMBL" id="AAHF01000012">
    <property type="protein sequence ID" value="EAL85776.1"/>
    <property type="molecule type" value="Genomic_DNA"/>
</dbReference>
<dbReference type="RefSeq" id="XP_747814.1">
    <property type="nucleotide sequence ID" value="XM_742721.1"/>
</dbReference>
<dbReference type="SMR" id="Q4WCW2"/>
<dbReference type="FunCoup" id="Q4WCW2">
    <property type="interactions" value="1223"/>
</dbReference>
<dbReference type="STRING" id="330879.Q4WCW2"/>
<dbReference type="EnsemblFungi" id="EAL85776">
    <property type="protein sequence ID" value="EAL85776"/>
    <property type="gene ID" value="AFUA_6G02630"/>
</dbReference>
<dbReference type="GeneID" id="3505095"/>
<dbReference type="KEGG" id="afm:AFUA_6G02630"/>
<dbReference type="eggNOG" id="KOG0329">
    <property type="taxonomic scope" value="Eukaryota"/>
</dbReference>
<dbReference type="HOGENOM" id="CLU_003041_1_0_1"/>
<dbReference type="InParanoid" id="Q4WCW2"/>
<dbReference type="OMA" id="YAHVEPK"/>
<dbReference type="OrthoDB" id="10265785at2759"/>
<dbReference type="Proteomes" id="UP000002530">
    <property type="component" value="Chromosome 6"/>
</dbReference>
<dbReference type="GO" id="GO:0000781">
    <property type="term" value="C:chromosome, telomeric region"/>
    <property type="evidence" value="ECO:0007669"/>
    <property type="project" value="EnsemblFungi"/>
</dbReference>
<dbReference type="GO" id="GO:0005681">
    <property type="term" value="C:spliceosomal complex"/>
    <property type="evidence" value="ECO:0007669"/>
    <property type="project" value="UniProtKB-KW"/>
</dbReference>
<dbReference type="GO" id="GO:0000346">
    <property type="term" value="C:transcription export complex"/>
    <property type="evidence" value="ECO:0007669"/>
    <property type="project" value="EnsemblFungi"/>
</dbReference>
<dbReference type="GO" id="GO:0005524">
    <property type="term" value="F:ATP binding"/>
    <property type="evidence" value="ECO:0007669"/>
    <property type="project" value="UniProtKB-KW"/>
</dbReference>
<dbReference type="GO" id="GO:0016887">
    <property type="term" value="F:ATP hydrolysis activity"/>
    <property type="evidence" value="ECO:0007669"/>
    <property type="project" value="RHEA"/>
</dbReference>
<dbReference type="GO" id="GO:0003729">
    <property type="term" value="F:mRNA binding"/>
    <property type="evidence" value="ECO:0000318"/>
    <property type="project" value="GO_Central"/>
</dbReference>
<dbReference type="GO" id="GO:0003724">
    <property type="term" value="F:RNA helicase activity"/>
    <property type="evidence" value="ECO:0000318"/>
    <property type="project" value="GO_Central"/>
</dbReference>
<dbReference type="GO" id="GO:0031124">
    <property type="term" value="P:mRNA 3'-end processing"/>
    <property type="evidence" value="ECO:0007669"/>
    <property type="project" value="EnsemblFungi"/>
</dbReference>
<dbReference type="GO" id="GO:0006406">
    <property type="term" value="P:mRNA export from nucleus"/>
    <property type="evidence" value="ECO:0000318"/>
    <property type="project" value="GO_Central"/>
</dbReference>
<dbReference type="GO" id="GO:0000398">
    <property type="term" value="P:mRNA splicing, via spliceosome"/>
    <property type="evidence" value="ECO:0000318"/>
    <property type="project" value="GO_Central"/>
</dbReference>
<dbReference type="GO" id="GO:0031509">
    <property type="term" value="P:subtelomeric heterochromatin formation"/>
    <property type="evidence" value="ECO:0007669"/>
    <property type="project" value="EnsemblFungi"/>
</dbReference>
<dbReference type="GO" id="GO:0006368">
    <property type="term" value="P:transcription elongation by RNA polymerase II"/>
    <property type="evidence" value="ECO:0007669"/>
    <property type="project" value="EnsemblFungi"/>
</dbReference>
<dbReference type="GO" id="GO:0006283">
    <property type="term" value="P:transcription-coupled nucleotide-excision repair"/>
    <property type="evidence" value="ECO:0007669"/>
    <property type="project" value="EnsemblFungi"/>
</dbReference>
<dbReference type="CDD" id="cd17950">
    <property type="entry name" value="DEADc_DDX39"/>
    <property type="match status" value="1"/>
</dbReference>
<dbReference type="CDD" id="cd18787">
    <property type="entry name" value="SF2_C_DEAD"/>
    <property type="match status" value="1"/>
</dbReference>
<dbReference type="FunFam" id="3.40.50.300:FF:000111">
    <property type="entry name" value="DEAD-box ATP-dependent RNA helicase"/>
    <property type="match status" value="1"/>
</dbReference>
<dbReference type="FunFam" id="3.40.50.300:FF:000168">
    <property type="entry name" value="DEAD-box ATP-dependent RNA helicase 56-like"/>
    <property type="match status" value="1"/>
</dbReference>
<dbReference type="Gene3D" id="3.40.50.300">
    <property type="entry name" value="P-loop containing nucleotide triphosphate hydrolases"/>
    <property type="match status" value="2"/>
</dbReference>
<dbReference type="InterPro" id="IPR011545">
    <property type="entry name" value="DEAD/DEAH_box_helicase_dom"/>
</dbReference>
<dbReference type="InterPro" id="IPR014001">
    <property type="entry name" value="Helicase_ATP-bd"/>
</dbReference>
<dbReference type="InterPro" id="IPR001650">
    <property type="entry name" value="Helicase_C-like"/>
</dbReference>
<dbReference type="InterPro" id="IPR027417">
    <property type="entry name" value="P-loop_NTPase"/>
</dbReference>
<dbReference type="InterPro" id="IPR014014">
    <property type="entry name" value="RNA_helicase_DEAD_Q_motif"/>
</dbReference>
<dbReference type="PANTHER" id="PTHR47958">
    <property type="entry name" value="ATP-DEPENDENT RNA HELICASE DBP3"/>
    <property type="match status" value="1"/>
</dbReference>
<dbReference type="Pfam" id="PF00270">
    <property type="entry name" value="DEAD"/>
    <property type="match status" value="1"/>
</dbReference>
<dbReference type="Pfam" id="PF00271">
    <property type="entry name" value="Helicase_C"/>
    <property type="match status" value="1"/>
</dbReference>
<dbReference type="SMART" id="SM00487">
    <property type="entry name" value="DEXDc"/>
    <property type="match status" value="1"/>
</dbReference>
<dbReference type="SMART" id="SM00490">
    <property type="entry name" value="HELICc"/>
    <property type="match status" value="1"/>
</dbReference>
<dbReference type="SUPFAM" id="SSF52540">
    <property type="entry name" value="P-loop containing nucleoside triphosphate hydrolases"/>
    <property type="match status" value="1"/>
</dbReference>
<dbReference type="PROSITE" id="PS51192">
    <property type="entry name" value="HELICASE_ATP_BIND_1"/>
    <property type="match status" value="1"/>
</dbReference>
<dbReference type="PROSITE" id="PS51194">
    <property type="entry name" value="HELICASE_CTER"/>
    <property type="match status" value="1"/>
</dbReference>
<dbReference type="PROSITE" id="PS51195">
    <property type="entry name" value="Q_MOTIF"/>
    <property type="match status" value="1"/>
</dbReference>
<reference key="1">
    <citation type="journal article" date="2005" name="Nature">
        <title>Genomic sequence of the pathogenic and allergenic filamentous fungus Aspergillus fumigatus.</title>
        <authorList>
            <person name="Nierman W.C."/>
            <person name="Pain A."/>
            <person name="Anderson M.J."/>
            <person name="Wortman J.R."/>
            <person name="Kim H.S."/>
            <person name="Arroyo J."/>
            <person name="Berriman M."/>
            <person name="Abe K."/>
            <person name="Archer D.B."/>
            <person name="Bermejo C."/>
            <person name="Bennett J.W."/>
            <person name="Bowyer P."/>
            <person name="Chen D."/>
            <person name="Collins M."/>
            <person name="Coulsen R."/>
            <person name="Davies R."/>
            <person name="Dyer P.S."/>
            <person name="Farman M.L."/>
            <person name="Fedorova N."/>
            <person name="Fedorova N.D."/>
            <person name="Feldblyum T.V."/>
            <person name="Fischer R."/>
            <person name="Fosker N."/>
            <person name="Fraser A."/>
            <person name="Garcia J.L."/>
            <person name="Garcia M.J."/>
            <person name="Goble A."/>
            <person name="Goldman G.H."/>
            <person name="Gomi K."/>
            <person name="Griffith-Jones S."/>
            <person name="Gwilliam R."/>
            <person name="Haas B.J."/>
            <person name="Haas H."/>
            <person name="Harris D.E."/>
            <person name="Horiuchi H."/>
            <person name="Huang J."/>
            <person name="Humphray S."/>
            <person name="Jimenez J."/>
            <person name="Keller N."/>
            <person name="Khouri H."/>
            <person name="Kitamoto K."/>
            <person name="Kobayashi T."/>
            <person name="Konzack S."/>
            <person name="Kulkarni R."/>
            <person name="Kumagai T."/>
            <person name="Lafton A."/>
            <person name="Latge J.-P."/>
            <person name="Li W."/>
            <person name="Lord A."/>
            <person name="Lu C."/>
            <person name="Majoros W.H."/>
            <person name="May G.S."/>
            <person name="Miller B.L."/>
            <person name="Mohamoud Y."/>
            <person name="Molina M."/>
            <person name="Monod M."/>
            <person name="Mouyna I."/>
            <person name="Mulligan S."/>
            <person name="Murphy L.D."/>
            <person name="O'Neil S."/>
            <person name="Paulsen I."/>
            <person name="Penalva M.A."/>
            <person name="Pertea M."/>
            <person name="Price C."/>
            <person name="Pritchard B.L."/>
            <person name="Quail M.A."/>
            <person name="Rabbinowitsch E."/>
            <person name="Rawlins N."/>
            <person name="Rajandream M.A."/>
            <person name="Reichard U."/>
            <person name="Renauld H."/>
            <person name="Robson G.D."/>
            <person name="Rodriguez de Cordoba S."/>
            <person name="Rodriguez-Pena J.M."/>
            <person name="Ronning C.M."/>
            <person name="Rutter S."/>
            <person name="Salzberg S.L."/>
            <person name="Sanchez M."/>
            <person name="Sanchez-Ferrero J.C."/>
            <person name="Saunders D."/>
            <person name="Seeger K."/>
            <person name="Squares R."/>
            <person name="Squares S."/>
            <person name="Takeuchi M."/>
            <person name="Tekaia F."/>
            <person name="Turner G."/>
            <person name="Vazquez de Aldana C.R."/>
            <person name="Weidman J."/>
            <person name="White O."/>
            <person name="Woodward J.R."/>
            <person name="Yu J.-H."/>
            <person name="Fraser C.M."/>
            <person name="Galagan J.E."/>
            <person name="Asai K."/>
            <person name="Machida M."/>
            <person name="Hall N."/>
            <person name="Barrell B.G."/>
            <person name="Denning D.W."/>
        </authorList>
    </citation>
    <scope>NUCLEOTIDE SEQUENCE [LARGE SCALE GENOMIC DNA]</scope>
    <source>
        <strain>ATCC MYA-4609 / CBS 101355 / FGSC A1100 / Af293</strain>
    </source>
</reference>
<organism>
    <name type="scientific">Aspergillus fumigatus (strain ATCC MYA-4609 / CBS 101355 / FGSC A1100 / Af293)</name>
    <name type="common">Neosartorya fumigata</name>
    <dbReference type="NCBI Taxonomy" id="330879"/>
    <lineage>
        <taxon>Eukaryota</taxon>
        <taxon>Fungi</taxon>
        <taxon>Dikarya</taxon>
        <taxon>Ascomycota</taxon>
        <taxon>Pezizomycotina</taxon>
        <taxon>Eurotiomycetes</taxon>
        <taxon>Eurotiomycetidae</taxon>
        <taxon>Eurotiales</taxon>
        <taxon>Aspergillaceae</taxon>
        <taxon>Aspergillus</taxon>
        <taxon>Aspergillus subgen. Fumigati</taxon>
    </lineage>
</organism>
<evidence type="ECO:0000250" key="1"/>
<evidence type="ECO:0000255" key="2">
    <source>
        <dbReference type="PROSITE-ProRule" id="PRU00541"/>
    </source>
</evidence>
<evidence type="ECO:0000255" key="3">
    <source>
        <dbReference type="PROSITE-ProRule" id="PRU00542"/>
    </source>
</evidence>
<evidence type="ECO:0000256" key="4">
    <source>
        <dbReference type="SAM" id="MobiDB-lite"/>
    </source>
</evidence>
<evidence type="ECO:0000305" key="5"/>
<proteinExistence type="inferred from homology"/>
<keyword id="KW-0067">ATP-binding</keyword>
<keyword id="KW-0347">Helicase</keyword>
<keyword id="KW-0378">Hydrolase</keyword>
<keyword id="KW-0507">mRNA processing</keyword>
<keyword id="KW-0508">mRNA splicing</keyword>
<keyword id="KW-0509">mRNA transport</keyword>
<keyword id="KW-0547">Nucleotide-binding</keyword>
<keyword id="KW-0539">Nucleus</keyword>
<keyword id="KW-1185">Reference proteome</keyword>
<keyword id="KW-0694">RNA-binding</keyword>
<keyword id="KW-0747">Spliceosome</keyword>
<keyword id="KW-0813">Transport</keyword>
<accession>Q4WCW2</accession>